<proteinExistence type="evidence at transcript level"/>
<organism>
    <name type="scientific">Woodchuck hepatitis B virus (isolate w64/pWS23)</name>
    <name type="common">WHV</name>
    <dbReference type="NCBI Taxonomy" id="10436"/>
    <lineage>
        <taxon>Viruses</taxon>
        <taxon>Riboviria</taxon>
        <taxon>Pararnavirae</taxon>
        <taxon>Artverviricota</taxon>
        <taxon>Revtraviricetes</taxon>
        <taxon>Blubervirales</taxon>
        <taxon>Hepadnaviridae</taxon>
        <taxon>Orthohepadnavirus</taxon>
        <taxon>Woodchuck hepatitis virus</taxon>
    </lineage>
</organism>
<name>X_WHV6</name>
<organismHost>
    <name type="scientific">Marmota monax</name>
    <name type="common">Woodchuck</name>
    <dbReference type="NCBI Taxonomy" id="9995"/>
</organismHost>
<keyword id="KW-1074">Activation of host NF-kappa-B by virus</keyword>
<keyword id="KW-0010">Activator</keyword>
<keyword id="KW-0053">Apoptosis</keyword>
<keyword id="KW-1035">Host cytoplasm</keyword>
<keyword id="KW-1079">Host G2/M cell cycle arrest by virus</keyword>
<keyword id="KW-1045">Host mitochondrion</keyword>
<keyword id="KW-1048">Host nucleus</keyword>
<keyword id="KW-0945">Host-virus interaction</keyword>
<keyword id="KW-1121">Modulation of host cell cycle by virus</keyword>
<keyword id="KW-0804">Transcription</keyword>
<keyword id="KW-0805">Transcription regulation</keyword>
<protein>
    <recommendedName>
        <fullName evidence="1">Protein X</fullName>
    </recommendedName>
    <alternativeName>
        <fullName evidence="1">HBx</fullName>
    </alternativeName>
    <alternativeName>
        <fullName evidence="1">Peptide X</fullName>
    </alternativeName>
    <alternativeName>
        <fullName evidence="1">pX</fullName>
    </alternativeName>
</protein>
<gene>
    <name evidence="1" type="primary">X</name>
</gene>
<dbReference type="EMBL" id="M15954">
    <property type="protein sequence ID" value="AAA69575.1"/>
    <property type="molecule type" value="mRNA"/>
</dbReference>
<dbReference type="PIR" id="C29498">
    <property type="entry name" value="QQVL64"/>
</dbReference>
<dbReference type="GO" id="GO:0033650">
    <property type="term" value="C:host cell mitochondrion"/>
    <property type="evidence" value="ECO:0007669"/>
    <property type="project" value="UniProtKB-SubCell"/>
</dbReference>
<dbReference type="GO" id="GO:0042025">
    <property type="term" value="C:host cell nucleus"/>
    <property type="evidence" value="ECO:0007669"/>
    <property type="project" value="UniProtKB-SubCell"/>
</dbReference>
<dbReference type="GO" id="GO:0006351">
    <property type="term" value="P:DNA-templated transcription"/>
    <property type="evidence" value="ECO:0007669"/>
    <property type="project" value="UniProtKB-UniRule"/>
</dbReference>
<dbReference type="GO" id="GO:0085033">
    <property type="term" value="P:symbiont-mediated activation of host NF-kappaB cascade"/>
    <property type="evidence" value="ECO:0007669"/>
    <property type="project" value="UniProtKB-UniRule"/>
</dbReference>
<dbReference type="GO" id="GO:0039592">
    <property type="term" value="P:symbiont-mediated arrest of host cell cycle during G2/M transition"/>
    <property type="evidence" value="ECO:0007669"/>
    <property type="project" value="UniProtKB-UniRule"/>
</dbReference>
<dbReference type="GO" id="GO:0019079">
    <property type="term" value="P:viral genome replication"/>
    <property type="evidence" value="ECO:0007669"/>
    <property type="project" value="UniProtKB-UniRule"/>
</dbReference>
<dbReference type="HAMAP" id="MF_04074">
    <property type="entry name" value="HBV_X"/>
    <property type="match status" value="1"/>
</dbReference>
<dbReference type="InterPro" id="IPR000236">
    <property type="entry name" value="Transactivation_prot_X"/>
</dbReference>
<dbReference type="Pfam" id="PF00739">
    <property type="entry name" value="X"/>
    <property type="match status" value="1"/>
</dbReference>
<sequence>MAARLCCQLDSARDVLLLRPIGPQSSGPPFPRPAAGSAASSASSPSPSDESDLPLGRLPACFASASGPCCLVFTCADLRTMDSTVNFVSWHAKRQLGMPSKDLWTPYIKDQLLTKWEEGSIDPRLSIFVLGGCRHKCMRLL</sequence>
<evidence type="ECO:0000255" key="1">
    <source>
        <dbReference type="HAMAP-Rule" id="MF_04074"/>
    </source>
</evidence>
<evidence type="ECO:0000256" key="2">
    <source>
        <dbReference type="SAM" id="MobiDB-lite"/>
    </source>
</evidence>
<feature type="chain" id="PRO_0000222375" description="Protein X">
    <location>
        <begin position="1"/>
        <end position="141"/>
    </location>
</feature>
<feature type="region of interest" description="Disordered" evidence="2">
    <location>
        <begin position="22"/>
        <end position="52"/>
    </location>
</feature>
<feature type="region of interest" description="Mitochondrial targeting sequence" evidence="1">
    <location>
        <begin position="68"/>
        <end position="113"/>
    </location>
</feature>
<feature type="compositionally biased region" description="Low complexity" evidence="2">
    <location>
        <begin position="33"/>
        <end position="48"/>
    </location>
</feature>
<comment type="function">
    <text evidence="1">Multifunctional protein that plays a role in silencing host antiviral defenses and promoting viral transcription. Does not seem to be essential for HBV infection. May be directly involved in development of cirrhosis and liver cancer (hepatocellular carcinoma). Most of cytosolic activities involve modulation of cytosolic calcium. The effect on apoptosis is controversial depending on the cell types in which the studies have been conducted. May induce apoptosis by localizing in mitochondria and causing loss of mitochondrial membrane potential. May also modulate apoptosis by binding host CFLAR, a key regulator of the death-inducing signaling complex (DISC). Promotes viral transcription by using the host E3 ubiquitin ligase DDB1 to target the SMC5-SMC6 complex to proteasomal degradation. This host complex would otherwise bind to viral episomal DNA, and prevents its transcription. Moderately stimulates transcription of many different viral and cellular transcription elements. Promoters and enhancers stimulated by HBx contain DNA binding sites for NF-kappa-B, AP-1, AP-2, c-EBP, ATF/CREB, or the calcium-activated factor NF-AT.</text>
</comment>
<comment type="subunit">
    <text evidence="1">May form homodimer. May interact with host CEBPA, CFLAR, CREB1, DDB1, E4F1, HBXIP, HSPD1/HSP60, NFKBIA, POLR2E and SMAD4. Interacts with host SMC5-SMC6 complex and induces its degradation. Interacts with host TRPC4AP; leading to prevent ubiquitination of TRPC4AP. Interacts with host PLSCR1; this interaction promotes ubiquitination and degradation of HBx and impairs HBx-mediated cell proliferation.</text>
</comment>
<comment type="subcellular location">
    <subcellularLocation>
        <location evidence="1">Host cytoplasm</location>
    </subcellularLocation>
    <subcellularLocation>
        <location evidence="1">Host nucleus</location>
    </subcellularLocation>
    <subcellularLocation>
        <location evidence="1">Host mitochondrion</location>
    </subcellularLocation>
    <text evidence="1">Mainly cytoplasmic as only a fraction is detected in the nucleus. In cytoplasm, a minor fraction associates with mitochondria or proteasomes.</text>
</comment>
<comment type="PTM">
    <text evidence="1">A fraction may be phosphorylated in insect cells and HepG2 cells, a human hepatoblastoma cell line. Phosphorylated in vitro by host protein kinase C or mitogen-activated protein kinase. N-acetylated in insect cells.</text>
</comment>
<comment type="similarity">
    <text evidence="1">Belongs to the orthohepadnavirus protein X family.</text>
</comment>
<accession>P11294</accession>
<reference key="1">
    <citation type="journal article" date="1986" name="Gene">
        <title>Nucleotide sequence of the woodchuck hepatitis virus surface antigen mRNAs and the variability of three overlapping viral genes.</title>
        <authorList>
            <person name="Etiemble J."/>
            <person name="Moeroey T."/>
            <person name="Trepo C."/>
            <person name="Tiollais P."/>
            <person name="Buendia M.-A."/>
        </authorList>
    </citation>
    <scope>NUCLEOTIDE SEQUENCE [MRNA]</scope>
</reference>